<protein>
    <recommendedName>
        <fullName>Interleukin-1 receptor accessory protein</fullName>
        <shortName>IL-1 receptor accessory protein</shortName>
        <shortName>IL-1RAcP</shortName>
        <ecNumber evidence="5">3.2.2.6</ecNumber>
    </recommendedName>
</protein>
<dbReference type="EC" id="3.2.2.6" evidence="5"/>
<dbReference type="EMBL" id="AY182233">
    <property type="protein sequence ID" value="AAO24704.1"/>
    <property type="molecule type" value="mRNA"/>
</dbReference>
<dbReference type="EMBL" id="AY182234">
    <property type="protein sequence ID" value="AAO24705.1"/>
    <property type="molecule type" value="mRNA"/>
</dbReference>
<dbReference type="RefSeq" id="NP_001028132.1">
    <molecule id="P59822-1"/>
    <property type="nucleotide sequence ID" value="NM_001032960.1"/>
</dbReference>
<dbReference type="SMR" id="P59822"/>
<dbReference type="FunCoup" id="P59822">
    <property type="interactions" value="1596"/>
</dbReference>
<dbReference type="STRING" id="9544.ENSMMUP00000029703"/>
<dbReference type="GlyCosmos" id="P59822">
    <property type="glycosylation" value="7 sites, No reported glycans"/>
</dbReference>
<dbReference type="PaxDb" id="9544-ENSMMUP00000029702"/>
<dbReference type="Ensembl" id="ENSMMUT00000107688.1">
    <molecule id="P59822-1"/>
    <property type="protein sequence ID" value="ENSMMUP00000068286.1"/>
    <property type="gene ID" value="ENSMMUG00000022562.4"/>
</dbReference>
<dbReference type="GeneID" id="574387"/>
<dbReference type="KEGG" id="mcc:574387"/>
<dbReference type="CTD" id="3556"/>
<dbReference type="VEuPathDB" id="HostDB:ENSMMUG00000022562"/>
<dbReference type="eggNOG" id="ENOG502QRDG">
    <property type="taxonomic scope" value="Eukaryota"/>
</dbReference>
<dbReference type="GeneTree" id="ENSGT01090000260076"/>
<dbReference type="HOGENOM" id="CLU_025552_1_0_1"/>
<dbReference type="InParanoid" id="P59822"/>
<dbReference type="OMA" id="YICTVRY"/>
<dbReference type="OrthoDB" id="9166379at2759"/>
<dbReference type="TreeFam" id="TF325519"/>
<dbReference type="Proteomes" id="UP000006718">
    <property type="component" value="Chromosome 2"/>
</dbReference>
<dbReference type="Bgee" id="ENSMMUG00000022562">
    <property type="expression patterns" value="Expressed in liver and 22 other cell types or tissues"/>
</dbReference>
<dbReference type="ExpressionAtlas" id="P59822">
    <property type="expression patterns" value="baseline"/>
</dbReference>
<dbReference type="GO" id="GO:0009986">
    <property type="term" value="C:cell surface"/>
    <property type="evidence" value="ECO:0000318"/>
    <property type="project" value="GO_Central"/>
</dbReference>
<dbReference type="GO" id="GO:0005576">
    <property type="term" value="C:extracellular region"/>
    <property type="evidence" value="ECO:0007669"/>
    <property type="project" value="UniProtKB-SubCell"/>
</dbReference>
<dbReference type="GO" id="GO:0005886">
    <property type="term" value="C:plasma membrane"/>
    <property type="evidence" value="ECO:0000318"/>
    <property type="project" value="GO_Central"/>
</dbReference>
<dbReference type="GO" id="GO:0004908">
    <property type="term" value="F:interleukin-1 receptor activity"/>
    <property type="evidence" value="ECO:0000318"/>
    <property type="project" value="GO_Central"/>
</dbReference>
<dbReference type="GO" id="GO:0061809">
    <property type="term" value="F:NAD+ nucleosidase activity, cyclic ADP-ribose generating"/>
    <property type="evidence" value="ECO:0007669"/>
    <property type="project" value="UniProtKB-EC"/>
</dbReference>
<dbReference type="GO" id="GO:0019221">
    <property type="term" value="P:cytokine-mediated signaling pathway"/>
    <property type="evidence" value="ECO:0000318"/>
    <property type="project" value="GO_Central"/>
</dbReference>
<dbReference type="GO" id="GO:0006954">
    <property type="term" value="P:inflammatory response"/>
    <property type="evidence" value="ECO:0007669"/>
    <property type="project" value="UniProtKB-KW"/>
</dbReference>
<dbReference type="GO" id="GO:0051965">
    <property type="term" value="P:positive regulation of synapse assembly"/>
    <property type="evidence" value="ECO:0000250"/>
    <property type="project" value="UniProtKB"/>
</dbReference>
<dbReference type="CDD" id="cd20992">
    <property type="entry name" value="Ig1_IL1R_like"/>
    <property type="match status" value="1"/>
</dbReference>
<dbReference type="CDD" id="cd20993">
    <property type="entry name" value="Ig2_IL-1RAP_like"/>
    <property type="match status" value="1"/>
</dbReference>
<dbReference type="CDD" id="cd20931">
    <property type="entry name" value="Ig3_IL1RAP"/>
    <property type="match status" value="1"/>
</dbReference>
<dbReference type="FunFam" id="2.60.40.10:FF:000462">
    <property type="entry name" value="Interleukin 1 receptor accessory protein"/>
    <property type="match status" value="1"/>
</dbReference>
<dbReference type="FunFam" id="2.60.40.10:FF:000634">
    <property type="entry name" value="Interleukin 1 receptor accessory protein"/>
    <property type="match status" value="1"/>
</dbReference>
<dbReference type="FunFam" id="2.60.40.10:FF:000756">
    <property type="entry name" value="Interleukin 1 receptor accessory protein"/>
    <property type="match status" value="1"/>
</dbReference>
<dbReference type="FunFam" id="3.40.50.10140:FF:000002">
    <property type="entry name" value="Interleukin 1 receptor accessory protein"/>
    <property type="match status" value="1"/>
</dbReference>
<dbReference type="Gene3D" id="2.60.40.10">
    <property type="entry name" value="Immunoglobulins"/>
    <property type="match status" value="3"/>
</dbReference>
<dbReference type="Gene3D" id="3.40.50.10140">
    <property type="entry name" value="Toll/interleukin-1 receptor homology (TIR) domain"/>
    <property type="match status" value="1"/>
</dbReference>
<dbReference type="InterPro" id="IPR007110">
    <property type="entry name" value="Ig-like_dom"/>
</dbReference>
<dbReference type="InterPro" id="IPR036179">
    <property type="entry name" value="Ig-like_dom_sf"/>
</dbReference>
<dbReference type="InterPro" id="IPR013783">
    <property type="entry name" value="Ig-like_fold"/>
</dbReference>
<dbReference type="InterPro" id="IPR003599">
    <property type="entry name" value="Ig_sub"/>
</dbReference>
<dbReference type="InterPro" id="IPR015621">
    <property type="entry name" value="IL-1_rcpt_fam"/>
</dbReference>
<dbReference type="InterPro" id="IPR004074">
    <property type="entry name" value="IL-1_rcpt_I/II-typ"/>
</dbReference>
<dbReference type="InterPro" id="IPR041416">
    <property type="entry name" value="IL-1RAcP-like_ig"/>
</dbReference>
<dbReference type="InterPro" id="IPR000157">
    <property type="entry name" value="TIR_dom"/>
</dbReference>
<dbReference type="InterPro" id="IPR035897">
    <property type="entry name" value="Toll_tir_struct_dom_sf"/>
</dbReference>
<dbReference type="PANTHER" id="PTHR11890:SF20">
    <property type="entry name" value="INTERLEUKIN-1 RECEPTOR ACCESSORY PROTEIN"/>
    <property type="match status" value="1"/>
</dbReference>
<dbReference type="PANTHER" id="PTHR11890">
    <property type="entry name" value="INTERLEUKIN-1 RECEPTOR FAMILY MEMBER"/>
    <property type="match status" value="1"/>
</dbReference>
<dbReference type="Pfam" id="PF18452">
    <property type="entry name" value="Ig_6"/>
    <property type="match status" value="1"/>
</dbReference>
<dbReference type="Pfam" id="PF01582">
    <property type="entry name" value="TIR"/>
    <property type="match status" value="1"/>
</dbReference>
<dbReference type="PRINTS" id="PR01536">
    <property type="entry name" value="INTRLKN1R12F"/>
</dbReference>
<dbReference type="PRINTS" id="PR01537">
    <property type="entry name" value="INTRLKN1R1F"/>
</dbReference>
<dbReference type="SMART" id="SM00409">
    <property type="entry name" value="IG"/>
    <property type="match status" value="3"/>
</dbReference>
<dbReference type="SMART" id="SM00255">
    <property type="entry name" value="TIR"/>
    <property type="match status" value="1"/>
</dbReference>
<dbReference type="SUPFAM" id="SSF48726">
    <property type="entry name" value="Immunoglobulin"/>
    <property type="match status" value="3"/>
</dbReference>
<dbReference type="SUPFAM" id="SSF52200">
    <property type="entry name" value="Toll/Interleukin receptor TIR domain"/>
    <property type="match status" value="1"/>
</dbReference>
<dbReference type="PROSITE" id="PS50835">
    <property type="entry name" value="IG_LIKE"/>
    <property type="match status" value="2"/>
</dbReference>
<dbReference type="PROSITE" id="PS50104">
    <property type="entry name" value="TIR"/>
    <property type="match status" value="1"/>
</dbReference>
<feature type="signal peptide" evidence="3">
    <location>
        <begin position="1"/>
        <end position="20"/>
    </location>
</feature>
<feature type="chain" id="PRO_0000015451" description="Interleukin-1 receptor accessory protein">
    <location>
        <begin position="21"/>
        <end position="570"/>
    </location>
</feature>
<feature type="topological domain" description="Extracellular" evidence="3">
    <location>
        <begin position="21"/>
        <end position="367"/>
    </location>
</feature>
<feature type="transmembrane region" description="Helical" evidence="3">
    <location>
        <begin position="368"/>
        <end position="388"/>
    </location>
</feature>
<feature type="topological domain" description="Cytoplasmic" evidence="3">
    <location>
        <begin position="389"/>
        <end position="570"/>
    </location>
</feature>
<feature type="domain" description="Ig-like C2-type 1">
    <location>
        <begin position="21"/>
        <end position="128"/>
    </location>
</feature>
<feature type="domain" description="Ig-like C2-type 2">
    <location>
        <begin position="136"/>
        <end position="226"/>
    </location>
</feature>
<feature type="domain" description="Ig-like C2-type 3">
    <location>
        <begin position="242"/>
        <end position="350"/>
    </location>
</feature>
<feature type="domain" description="TIR" evidence="5">
    <location>
        <begin position="403"/>
        <end position="546"/>
    </location>
</feature>
<feature type="region of interest" description="Essential for interaction with PTPRD" evidence="1">
    <location>
        <begin position="69"/>
        <end position="85"/>
    </location>
</feature>
<feature type="region of interest" description="Disordered" evidence="6">
    <location>
        <begin position="549"/>
        <end position="570"/>
    </location>
</feature>
<feature type="compositionally biased region" description="Polar residues" evidence="6">
    <location>
        <begin position="558"/>
        <end position="570"/>
    </location>
</feature>
<feature type="active site" evidence="5">
    <location>
        <position position="482"/>
    </location>
</feature>
<feature type="modified residue" description="Phosphoserine" evidence="2">
    <location>
        <position position="557"/>
    </location>
</feature>
<feature type="glycosylation site" description="N-linked (GlcNAc...) asparagine" evidence="3">
    <location>
        <position position="57"/>
    </location>
</feature>
<feature type="glycosylation site" description="N-linked (GlcNAc...) asparagine" evidence="3">
    <location>
        <position position="107"/>
    </location>
</feature>
<feature type="glycosylation site" description="N-linked (GlcNAc...) asparagine" evidence="3">
    <location>
        <position position="111"/>
    </location>
</feature>
<feature type="glycosylation site" description="N-linked (GlcNAc...) asparagine" evidence="3">
    <location>
        <position position="118"/>
    </location>
</feature>
<feature type="glycosylation site" description="N-linked (GlcNAc...) asparagine" evidence="3">
    <location>
        <position position="196"/>
    </location>
</feature>
<feature type="glycosylation site" description="N-linked (GlcNAc...) asparagine" evidence="3">
    <location>
        <position position="209"/>
    </location>
</feature>
<feature type="glycosylation site" description="N-linked (GlcNAc...) asparagine" evidence="3">
    <location>
        <position position="299"/>
    </location>
</feature>
<feature type="disulfide bond" evidence="4">
    <location>
        <begin position="24"/>
        <end position="122"/>
    </location>
</feature>
<feature type="disulfide bond" evidence="4">
    <location>
        <begin position="47"/>
        <end position="114"/>
    </location>
</feature>
<feature type="disulfide bond" evidence="4">
    <location>
        <begin position="137"/>
        <end position="181"/>
    </location>
</feature>
<feature type="disulfide bond" evidence="4">
    <location>
        <begin position="160"/>
        <end position="212"/>
    </location>
</feature>
<feature type="disulfide bond" evidence="4">
    <location>
        <begin position="266"/>
        <end position="332"/>
    </location>
</feature>
<organism>
    <name type="scientific">Macaca mulatta</name>
    <name type="common">Rhesus macaque</name>
    <dbReference type="NCBI Taxonomy" id="9544"/>
    <lineage>
        <taxon>Eukaryota</taxon>
        <taxon>Metazoa</taxon>
        <taxon>Chordata</taxon>
        <taxon>Craniata</taxon>
        <taxon>Vertebrata</taxon>
        <taxon>Euteleostomi</taxon>
        <taxon>Mammalia</taxon>
        <taxon>Eutheria</taxon>
        <taxon>Euarchontoglires</taxon>
        <taxon>Primates</taxon>
        <taxon>Haplorrhini</taxon>
        <taxon>Catarrhini</taxon>
        <taxon>Cercopithecidae</taxon>
        <taxon>Cercopithecinae</taxon>
        <taxon>Macaca</taxon>
    </lineage>
</organism>
<keyword id="KW-0025">Alternative splicing</keyword>
<keyword id="KW-1003">Cell membrane</keyword>
<keyword id="KW-1015">Disulfide bond</keyword>
<keyword id="KW-0325">Glycoprotein</keyword>
<keyword id="KW-0378">Hydrolase</keyword>
<keyword id="KW-0393">Immunoglobulin domain</keyword>
<keyword id="KW-0395">Inflammatory response</keyword>
<keyword id="KW-0472">Membrane</keyword>
<keyword id="KW-0520">NAD</keyword>
<keyword id="KW-0597">Phosphoprotein</keyword>
<keyword id="KW-0675">Receptor</keyword>
<keyword id="KW-1185">Reference proteome</keyword>
<keyword id="KW-0677">Repeat</keyword>
<keyword id="KW-0964">Secreted</keyword>
<keyword id="KW-0732">Signal</keyword>
<keyword id="KW-0812">Transmembrane</keyword>
<keyword id="KW-1133">Transmembrane helix</keyword>
<name>IL1AP_MACMU</name>
<comment type="function">
    <text evidence="1 2 7">Coreceptor for IL1RL2 in the IL-36 signaling system (By similarity). Coreceptor with IL1R1 in the IL-1 signaling system. Associates with IL1R1 bound to IL1B to form the high affinity interleukin-1 receptor complex which mediates interleukin-1-dependent activation of NF-kappa-B and other pathways. Signaling involves the recruitment of adapter molecules such as TOLLIP, MYD88, and IRAK1 or IRAK2 via the respective TIR domains of the receptor/coreceptor subunits. Recruits TOLLIP to the signaling complex. Does not bind to interleukin-1 alone; binding of IL1RN to IL1R1, prevents its association with IL1R1 to form a signaling complex. The cellular response is modulated through a non-signaling association with the membrane IL1R2 decoy receptor. Coreceptor for IL1RL1 in the IL-33 signaling system (By similarity). Can bidirectionally induce pre- and postsynaptic differentiation of neurons by trans-synaptically binding to PTPRD (By similarity). May play a role in IL1B-mediated costimulation of IFNG production from T-helper 1 (Th1) cells (By similarity).</text>
</comment>
<comment type="function">
    <molecule>Isoform 2</molecule>
    <text evidence="1 7">Associates with secreted ligand-bound IL1R2 and increases the affinity of secreted IL1R2 for IL1B; this complex formation may be the dominant mechanism for neutralization of IL1B by secreted/soluble receptors (PubMed:12530978). Enhances the ability of secreted IL1R1 to inhibit IL-33 signaling (By similarity).</text>
</comment>
<comment type="catalytic activity">
    <reaction evidence="5">
        <text>NAD(+) + H2O = ADP-D-ribose + nicotinamide + H(+)</text>
        <dbReference type="Rhea" id="RHEA:16301"/>
        <dbReference type="ChEBI" id="CHEBI:15377"/>
        <dbReference type="ChEBI" id="CHEBI:15378"/>
        <dbReference type="ChEBI" id="CHEBI:17154"/>
        <dbReference type="ChEBI" id="CHEBI:57540"/>
        <dbReference type="ChEBI" id="CHEBI:57967"/>
        <dbReference type="EC" id="3.2.2.6"/>
    </reaction>
    <physiologicalReaction direction="left-to-right" evidence="5">
        <dbReference type="Rhea" id="RHEA:16302"/>
    </physiologicalReaction>
</comment>
<comment type="subunit">
    <text evidence="1 2">The interleukin-36 receptor complex is a heterodimer of IL1RL2 and IL1RAP; the association is inhibited by IL36RN (By similarity). The interleukin-1 receptor complex is a heterodimer of IL1R1 and IL1RAP. Associates with IL1R2 to form a non-signaling interleukin-1 receptor complex. Interacts with IL-33-bound IL1RL1 to form the minimal interleukin-33 signaling complex with a 1:1:1 stoichiometry. Interacts with KIT (independently of stimulation with KITLG/SCF). A mast cell-specific KITLG/SCF-induced interleukin-33 signaling complex contains IL1RL1, IL1RAP, KIT and MYD88 (By similarity). Interacts (via the first immunoglobilin domain) with PTPRD (via the third immunoglobilin domain); induces pre- and postsynaptic differentiation of neurons (By similarity).</text>
</comment>
<comment type="subcellular location">
    <molecule>Isoform 1</molecule>
    <subcellularLocation>
        <location>Cell membrane</location>
        <topology>Single-pass type I membrane protein</topology>
    </subcellularLocation>
</comment>
<comment type="subcellular location">
    <molecule>Isoform 2</molecule>
    <subcellularLocation>
        <location>Secreted</location>
    </subcellularLocation>
</comment>
<comment type="alternative products">
    <event type="alternative splicing"/>
    <isoform>
        <id>P59822-1</id>
        <name>1</name>
        <name>Membrane-bound IL-1R AcP</name>
        <sequence type="displayed"/>
    </isoform>
    <isoform>
        <id>P59822-2</id>
        <name>2</name>
        <name>Soluble IL-1R AcP</name>
        <sequence type="not described"/>
    </isoform>
</comment>
<comment type="domain">
    <text evidence="5">The TIR domain mediates NAD(+) hydrolase (NADase) activity. Self-association of TIR domains is required for NADase activity.</text>
</comment>
<comment type="similarity">
    <text evidence="8">Belongs to the interleukin-1 receptor family.</text>
</comment>
<accession>P59822</accession>
<proteinExistence type="evidence at protein level"/>
<sequence length="570" mass="65393">MTLLWCVVSLYFYGILQSDASERCDDWGLDTMRQIQVFEDEPARIKCPLFEHFLKFNYSTAHSAGLTLIWYWTRQDRDLEEPINFRLPENRISKEKDVLWFRPTLLNDTGNYTCMLRNTTYCSKVAFPLEVVQKDSCFNSPMKLPVHKLYIEYGIQRITCPNVDGYFPSSVKPTITWYMGCYKIQNFNNVIPEGMNLSFLIAFISNNGNYTCVVTYPENGRTFHLTRTLTVKVVGSPKNAVPPVIHSPNDHVVYEKEPGEELLIPCTVYFSFLMDSRNEVWWTIDGKKPDDIPIDVTINESISHSRTEDETRTQILSIKKVTSEDLKRSYVCHARSAKGEVAKAATVKQKVPAPRYTVELACGFGATVLLVVILIVVYHVYWLEMVLFYRAHFGTDETILDGKEYDIYVSYARNAEEEEFVLLTLRGVLENEFGYKLCIFDRDSLPGGIVTDETLSFIQKSRRLLVVLSPNYVLQGTQALLELKAGLENMASQGNINVILVQYKAVKETKVKELKRAKTVLTVIKWKGEKSKYPQGRFWKQLQVAMPVKKSPRRSSSDEQGLSYSSLKNV</sequence>
<gene>
    <name type="primary">IL1RAP</name>
</gene>
<reference key="1">
    <citation type="journal article" date="2003" name="Immunity">
        <title>The soluble form of IL-1 receptor accessory protein enhances the ability of soluble type II IL-1 receptor to inhibit IL-1 action.</title>
        <authorList>
            <person name="Smith D.E."/>
            <person name="Hanna R."/>
            <person name="Friend D."/>
            <person name="Moore H."/>
            <person name="Chen H."/>
            <person name="Farese A.M."/>
            <person name="MacVittie T.J."/>
            <person name="Virca G.D."/>
            <person name="Sims J.E."/>
        </authorList>
    </citation>
    <scope>NUCLEOTIDE SEQUENCE [MRNA]</scope>
    <scope>FUNCTION</scope>
    <scope>ALTERNATIVE SPLICING</scope>
    <scope>CHARACTERIZATION OF ISOFORM 2</scope>
</reference>
<evidence type="ECO:0000250" key="1">
    <source>
        <dbReference type="UniProtKB" id="Q61730"/>
    </source>
</evidence>
<evidence type="ECO:0000250" key="2">
    <source>
        <dbReference type="UniProtKB" id="Q9NPH3"/>
    </source>
</evidence>
<evidence type="ECO:0000255" key="3"/>
<evidence type="ECO:0000255" key="4">
    <source>
        <dbReference type="PROSITE-ProRule" id="PRU00114"/>
    </source>
</evidence>
<evidence type="ECO:0000255" key="5">
    <source>
        <dbReference type="PROSITE-ProRule" id="PRU00204"/>
    </source>
</evidence>
<evidence type="ECO:0000256" key="6">
    <source>
        <dbReference type="SAM" id="MobiDB-lite"/>
    </source>
</evidence>
<evidence type="ECO:0000269" key="7">
    <source>
    </source>
</evidence>
<evidence type="ECO:0000305" key="8"/>